<protein>
    <recommendedName>
        <fullName>tRNA pseudouridine synthase 1</fullName>
        <ecNumber evidence="4">5.4.99.-</ecNumber>
    </recommendedName>
    <alternativeName>
        <fullName>tRNA pseudouridylate synthase 1</fullName>
    </alternativeName>
    <alternativeName>
        <fullName>tRNA-uridine isomerase 1</fullName>
    </alternativeName>
</protein>
<dbReference type="EC" id="5.4.99.-" evidence="4"/>
<dbReference type="EMBL" id="AJ251329">
    <property type="protein sequence ID" value="CAB61835.1"/>
    <property type="molecule type" value="mRNA"/>
</dbReference>
<dbReference type="EMBL" id="CU329672">
    <property type="protein sequence ID" value="CAA22472.1"/>
    <property type="molecule type" value="Genomic_DNA"/>
</dbReference>
<dbReference type="PIR" id="T40907">
    <property type="entry name" value="T40907"/>
</dbReference>
<dbReference type="RefSeq" id="NP_588446.1">
    <property type="nucleotide sequence ID" value="NM_001023437.2"/>
</dbReference>
<dbReference type="SMR" id="O94396"/>
<dbReference type="BioGRID" id="275654">
    <property type="interactions" value="35"/>
</dbReference>
<dbReference type="FunCoup" id="O94396">
    <property type="interactions" value="843"/>
</dbReference>
<dbReference type="STRING" id="284812.O94396"/>
<dbReference type="iPTMnet" id="O94396"/>
<dbReference type="PaxDb" id="4896-SPCC126.03.1"/>
<dbReference type="EnsemblFungi" id="SPCC126.03.1">
    <property type="protein sequence ID" value="SPCC126.03.1:pep"/>
    <property type="gene ID" value="SPCC126.03"/>
</dbReference>
<dbReference type="GeneID" id="2539082"/>
<dbReference type="KEGG" id="spo:2539082"/>
<dbReference type="PomBase" id="SPCC126.03">
    <property type="gene designation" value="pus1"/>
</dbReference>
<dbReference type="VEuPathDB" id="FungiDB:SPCC126.03"/>
<dbReference type="eggNOG" id="KOG2553">
    <property type="taxonomic scope" value="Eukaryota"/>
</dbReference>
<dbReference type="HOGENOM" id="CLU_021971_1_0_1"/>
<dbReference type="InParanoid" id="O94396"/>
<dbReference type="OMA" id="NKAFDCR"/>
<dbReference type="PhylomeDB" id="O94396"/>
<dbReference type="BRENDA" id="5.4.99.B22">
    <property type="organism ID" value="5613"/>
</dbReference>
<dbReference type="PRO" id="PR:O94396"/>
<dbReference type="Proteomes" id="UP000002485">
    <property type="component" value="Chromosome III"/>
</dbReference>
<dbReference type="GO" id="GO:0005634">
    <property type="term" value="C:nucleus"/>
    <property type="evidence" value="ECO:0000316"/>
    <property type="project" value="PomBase"/>
</dbReference>
<dbReference type="GO" id="GO:0046872">
    <property type="term" value="F:metal ion binding"/>
    <property type="evidence" value="ECO:0007669"/>
    <property type="project" value="UniProtKB-KW"/>
</dbReference>
<dbReference type="GO" id="GO:0009982">
    <property type="term" value="F:pseudouridine synthase activity"/>
    <property type="evidence" value="ECO:0000314"/>
    <property type="project" value="PomBase"/>
</dbReference>
<dbReference type="GO" id="GO:0003723">
    <property type="term" value="F:RNA binding"/>
    <property type="evidence" value="ECO:0007669"/>
    <property type="project" value="InterPro"/>
</dbReference>
<dbReference type="GO" id="GO:0106032">
    <property type="term" value="F:snRNA pseudouridine synthase activity"/>
    <property type="evidence" value="ECO:0000269"/>
    <property type="project" value="PomBase"/>
</dbReference>
<dbReference type="GO" id="GO:0106029">
    <property type="term" value="F:tRNA pseudouridine synthase activity"/>
    <property type="evidence" value="ECO:0007669"/>
    <property type="project" value="RHEA"/>
</dbReference>
<dbReference type="GO" id="GO:0006397">
    <property type="term" value="P:mRNA processing"/>
    <property type="evidence" value="ECO:0007669"/>
    <property type="project" value="UniProtKB-KW"/>
</dbReference>
<dbReference type="GO" id="GO:1990481">
    <property type="term" value="P:mRNA pseudouridine synthesis"/>
    <property type="evidence" value="ECO:0000318"/>
    <property type="project" value="GO_Central"/>
</dbReference>
<dbReference type="GO" id="GO:0031120">
    <property type="term" value="P:snRNA pseudouridine synthesis"/>
    <property type="evidence" value="ECO:0000269"/>
    <property type="project" value="PomBase"/>
</dbReference>
<dbReference type="GO" id="GO:0031119">
    <property type="term" value="P:tRNA pseudouridine synthesis"/>
    <property type="evidence" value="ECO:0000314"/>
    <property type="project" value="PomBase"/>
</dbReference>
<dbReference type="CDD" id="cd02568">
    <property type="entry name" value="PseudoU_synth_PUS1_PUS2"/>
    <property type="match status" value="1"/>
</dbReference>
<dbReference type="FunFam" id="3.30.70.580:FF:000002">
    <property type="entry name" value="tRNA pseudouridine synthase"/>
    <property type="match status" value="1"/>
</dbReference>
<dbReference type="FunFam" id="3.30.70.660:FF:000002">
    <property type="entry name" value="tRNA pseudouridine synthase"/>
    <property type="match status" value="1"/>
</dbReference>
<dbReference type="Gene3D" id="3.30.70.660">
    <property type="entry name" value="Pseudouridine synthase I, catalytic domain, C-terminal subdomain"/>
    <property type="match status" value="1"/>
</dbReference>
<dbReference type="Gene3D" id="3.30.70.580">
    <property type="entry name" value="Pseudouridine synthase I, catalytic domain, N-terminal subdomain"/>
    <property type="match status" value="1"/>
</dbReference>
<dbReference type="InterPro" id="IPR020103">
    <property type="entry name" value="PsdUridine_synth_cat_dom_sf"/>
</dbReference>
<dbReference type="InterPro" id="IPR001406">
    <property type="entry name" value="PsdUridine_synth_TruA"/>
</dbReference>
<dbReference type="InterPro" id="IPR020097">
    <property type="entry name" value="PsdUridine_synth_TruA_a/b_dom"/>
</dbReference>
<dbReference type="InterPro" id="IPR020095">
    <property type="entry name" value="PsdUridine_synth_TruA_C"/>
</dbReference>
<dbReference type="InterPro" id="IPR041708">
    <property type="entry name" value="PUS1/PUS2-like"/>
</dbReference>
<dbReference type="InterPro" id="IPR020094">
    <property type="entry name" value="TruA/RsuA/RluB/E/F_N"/>
</dbReference>
<dbReference type="NCBIfam" id="TIGR00071">
    <property type="entry name" value="hisT_truA"/>
    <property type="match status" value="1"/>
</dbReference>
<dbReference type="PANTHER" id="PTHR11142">
    <property type="entry name" value="PSEUDOURIDYLATE SYNTHASE"/>
    <property type="match status" value="1"/>
</dbReference>
<dbReference type="PANTHER" id="PTHR11142:SF4">
    <property type="entry name" value="PSEUDOURIDYLATE SYNTHASE 1 HOMOLOG"/>
    <property type="match status" value="1"/>
</dbReference>
<dbReference type="Pfam" id="PF01416">
    <property type="entry name" value="PseudoU_synth_1"/>
    <property type="match status" value="1"/>
</dbReference>
<dbReference type="SUPFAM" id="SSF55120">
    <property type="entry name" value="Pseudouridine synthase"/>
    <property type="match status" value="1"/>
</dbReference>
<evidence type="ECO:0000250" key="1">
    <source>
        <dbReference type="UniProtKB" id="P07649"/>
    </source>
</evidence>
<evidence type="ECO:0000250" key="2">
    <source>
        <dbReference type="UniProtKB" id="Q12211"/>
    </source>
</evidence>
<evidence type="ECO:0000256" key="3">
    <source>
        <dbReference type="SAM" id="MobiDB-lite"/>
    </source>
</evidence>
<evidence type="ECO:0000269" key="4">
    <source>
    </source>
</evidence>
<evidence type="ECO:0000269" key="5">
    <source>
    </source>
</evidence>
<evidence type="ECO:0000305" key="6"/>
<sequence length="534" mass="60324">MGRGGKRTWYNGDRREAKRNRPNSIYNGEGRPENLVVGEKKPKRKVACLVGYCGSGYHGMQLNPPSKTIEGDLFDAFVKAGAVSSYNADDPKKVALARAARTDKGVHAAGNVISLKLIMEDEKLIEKVNEHLPPSIRLWDVIRTINSFNPRTYCESRIYEYMVPTYAFVPPKPSSILGNCIMKNSPMPAEPINKENINQLSRSLFYEEGKEFWDDYDIAAKEILSLYEQDPEGFVNPYSKRGAAALANSENNKGSEAGVSAKTNPDMDSDSSAIVNEFLKPDSVEDESAGSKIDPSYRLERALKHIEVLKLKNYRISADRLSVIRETLNQYVGVHNFHNFTVGQAFHQKNSNRVIRSFTASDPFMIGDTEWISCKVHGQSFMLHQIRKMIALAILVVRTGCPVERIQDAFKKTKINIPKGPGFGLLLESPFFKGYNEHKAPENNRDPIDFTKYEQKITAFKHAHIYDKIFLEEARKQVFHCFLSFIDSYNEEDFSYLSDIGITEKTQEVSSKLPDVLSSDEEEDSAENKDDLEG</sequence>
<proteinExistence type="evidence at protein level"/>
<feature type="chain" id="PRO_0000057528" description="tRNA pseudouridine synthase 1">
    <location>
        <begin position="1"/>
        <end position="534"/>
    </location>
</feature>
<feature type="region of interest" description="Disordered" evidence="3">
    <location>
        <begin position="1"/>
        <end position="32"/>
    </location>
</feature>
<feature type="region of interest" description="Disordered" evidence="3">
    <location>
        <begin position="246"/>
        <end position="271"/>
    </location>
</feature>
<feature type="region of interest" description="Disordered" evidence="3">
    <location>
        <begin position="507"/>
        <end position="534"/>
    </location>
</feature>
<feature type="active site" description="Nucleophile" evidence="1">
    <location>
        <position position="103"/>
    </location>
</feature>
<feature type="modified residue" description="Phosphoserine" evidence="5">
    <location>
        <position position="518"/>
    </location>
</feature>
<feature type="modified residue" description="Phosphoserine" evidence="5">
    <location>
        <position position="519"/>
    </location>
</feature>
<feature type="modified residue" description="Phosphoserine" evidence="5">
    <location>
        <position position="525"/>
    </location>
</feature>
<accession>O94396</accession>
<reference key="1">
    <citation type="journal article" date="2000" name="Nucleic Acids Res.">
        <title>Cloning and characterization of the Schizosaccharomyces pombe tRNA: pseudouridine synthase Pus1p.</title>
        <authorList>
            <person name="Hellmuth K."/>
            <person name="Grosjean H."/>
            <person name="Motorin Y."/>
            <person name="Deinert K."/>
            <person name="Hurt E."/>
            <person name="Simos G."/>
        </authorList>
    </citation>
    <scope>NUCLEOTIDE SEQUENCE [MRNA]</scope>
    <scope>FUNCTION</scope>
    <scope>SUBCELLULAR LOCATION</scope>
</reference>
<reference key="2">
    <citation type="journal article" date="2002" name="Nature">
        <title>The genome sequence of Schizosaccharomyces pombe.</title>
        <authorList>
            <person name="Wood V."/>
            <person name="Gwilliam R."/>
            <person name="Rajandream M.A."/>
            <person name="Lyne M.H."/>
            <person name="Lyne R."/>
            <person name="Stewart A."/>
            <person name="Sgouros J.G."/>
            <person name="Peat N."/>
            <person name="Hayles J."/>
            <person name="Baker S.G."/>
            <person name="Basham D."/>
            <person name="Bowman S."/>
            <person name="Brooks K."/>
            <person name="Brown D."/>
            <person name="Brown S."/>
            <person name="Chillingworth T."/>
            <person name="Churcher C.M."/>
            <person name="Collins M."/>
            <person name="Connor R."/>
            <person name="Cronin A."/>
            <person name="Davis P."/>
            <person name="Feltwell T."/>
            <person name="Fraser A."/>
            <person name="Gentles S."/>
            <person name="Goble A."/>
            <person name="Hamlin N."/>
            <person name="Harris D.E."/>
            <person name="Hidalgo J."/>
            <person name="Hodgson G."/>
            <person name="Holroyd S."/>
            <person name="Hornsby T."/>
            <person name="Howarth S."/>
            <person name="Huckle E.J."/>
            <person name="Hunt S."/>
            <person name="Jagels K."/>
            <person name="James K.D."/>
            <person name="Jones L."/>
            <person name="Jones M."/>
            <person name="Leather S."/>
            <person name="McDonald S."/>
            <person name="McLean J."/>
            <person name="Mooney P."/>
            <person name="Moule S."/>
            <person name="Mungall K.L."/>
            <person name="Murphy L.D."/>
            <person name="Niblett D."/>
            <person name="Odell C."/>
            <person name="Oliver K."/>
            <person name="O'Neil S."/>
            <person name="Pearson D."/>
            <person name="Quail M.A."/>
            <person name="Rabbinowitsch E."/>
            <person name="Rutherford K.M."/>
            <person name="Rutter S."/>
            <person name="Saunders D."/>
            <person name="Seeger K."/>
            <person name="Sharp S."/>
            <person name="Skelton J."/>
            <person name="Simmonds M.N."/>
            <person name="Squares R."/>
            <person name="Squares S."/>
            <person name="Stevens K."/>
            <person name="Taylor K."/>
            <person name="Taylor R.G."/>
            <person name="Tivey A."/>
            <person name="Walsh S.V."/>
            <person name="Warren T."/>
            <person name="Whitehead S."/>
            <person name="Woodward J.R."/>
            <person name="Volckaert G."/>
            <person name="Aert R."/>
            <person name="Robben J."/>
            <person name="Grymonprez B."/>
            <person name="Weltjens I."/>
            <person name="Vanstreels E."/>
            <person name="Rieger M."/>
            <person name="Schaefer M."/>
            <person name="Mueller-Auer S."/>
            <person name="Gabel C."/>
            <person name="Fuchs M."/>
            <person name="Duesterhoeft A."/>
            <person name="Fritzc C."/>
            <person name="Holzer E."/>
            <person name="Moestl D."/>
            <person name="Hilbert H."/>
            <person name="Borzym K."/>
            <person name="Langer I."/>
            <person name="Beck A."/>
            <person name="Lehrach H."/>
            <person name="Reinhardt R."/>
            <person name="Pohl T.M."/>
            <person name="Eger P."/>
            <person name="Zimmermann W."/>
            <person name="Wedler H."/>
            <person name="Wambutt R."/>
            <person name="Purnelle B."/>
            <person name="Goffeau A."/>
            <person name="Cadieu E."/>
            <person name="Dreano S."/>
            <person name="Gloux S."/>
            <person name="Lelaure V."/>
            <person name="Mottier S."/>
            <person name="Galibert F."/>
            <person name="Aves S.J."/>
            <person name="Xiang Z."/>
            <person name="Hunt C."/>
            <person name="Moore K."/>
            <person name="Hurst S.M."/>
            <person name="Lucas M."/>
            <person name="Rochet M."/>
            <person name="Gaillardin C."/>
            <person name="Tallada V.A."/>
            <person name="Garzon A."/>
            <person name="Thode G."/>
            <person name="Daga R.R."/>
            <person name="Cruzado L."/>
            <person name="Jimenez J."/>
            <person name="Sanchez M."/>
            <person name="del Rey F."/>
            <person name="Benito J."/>
            <person name="Dominguez A."/>
            <person name="Revuelta J.L."/>
            <person name="Moreno S."/>
            <person name="Armstrong J."/>
            <person name="Forsburg S.L."/>
            <person name="Cerutti L."/>
            <person name="Lowe T."/>
            <person name="McCombie W.R."/>
            <person name="Paulsen I."/>
            <person name="Potashkin J."/>
            <person name="Shpakovski G.V."/>
            <person name="Ussery D."/>
            <person name="Barrell B.G."/>
            <person name="Nurse P."/>
        </authorList>
    </citation>
    <scope>NUCLEOTIDE SEQUENCE [LARGE SCALE GENOMIC DNA]</scope>
    <source>
        <strain>972 / ATCC 24843</strain>
    </source>
</reference>
<reference key="3">
    <citation type="journal article" date="2008" name="J. Proteome Res.">
        <title>Phosphoproteome analysis of fission yeast.</title>
        <authorList>
            <person name="Wilson-Grady J.T."/>
            <person name="Villen J."/>
            <person name="Gygi S.P."/>
        </authorList>
    </citation>
    <scope>PHOSPHORYLATION [LARGE SCALE ANALYSIS] AT SER-518; SER-519 AND SER-525</scope>
    <scope>IDENTIFICATION BY MASS SPECTROMETRY</scope>
</reference>
<name>PUS1_SCHPO</name>
<comment type="function">
    <text evidence="2 4">Formation of pseudouridine at positions 27 and 28 in the anticodon stem and loop of transfer RNAs; at positions 34 and 36 of intron-containing precursor tRNA(Ile) and at position 35 in the intron-containing tRNA(Tyr) (PubMed:11095668). Catalyzes pseudouridylation at position 44 in U2 snRNA (By similarity). Also catalyzes pseudouridylation of mRNAs (By similarity).</text>
</comment>
<comment type="catalytic activity">
    <reaction evidence="4">
        <text>a uridine in tRNA = a pseudouridine in tRNA</text>
        <dbReference type="Rhea" id="RHEA:54572"/>
        <dbReference type="Rhea" id="RHEA-COMP:13339"/>
        <dbReference type="Rhea" id="RHEA-COMP:13934"/>
        <dbReference type="ChEBI" id="CHEBI:65314"/>
        <dbReference type="ChEBI" id="CHEBI:65315"/>
    </reaction>
</comment>
<comment type="catalytic activity">
    <reaction evidence="2">
        <text>uridine in snRNA = pseudouridine in snRNA</text>
        <dbReference type="Rhea" id="RHEA:51124"/>
        <dbReference type="Rhea" id="RHEA-COMP:12891"/>
        <dbReference type="Rhea" id="RHEA-COMP:12892"/>
        <dbReference type="ChEBI" id="CHEBI:65314"/>
        <dbReference type="ChEBI" id="CHEBI:65315"/>
    </reaction>
</comment>
<comment type="catalytic activity">
    <reaction evidence="2">
        <text>a uridine in mRNA = a pseudouridine in mRNA</text>
        <dbReference type="Rhea" id="RHEA:56644"/>
        <dbReference type="Rhea" id="RHEA-COMP:14658"/>
        <dbReference type="Rhea" id="RHEA-COMP:14659"/>
        <dbReference type="ChEBI" id="CHEBI:65314"/>
        <dbReference type="ChEBI" id="CHEBI:65315"/>
    </reaction>
</comment>
<comment type="cofactor">
    <cofactor evidence="2">
        <name>Zn(2+)</name>
        <dbReference type="ChEBI" id="CHEBI:29105"/>
    </cofactor>
    <text evidence="2">Binds 1 zinc ion per subunit.</text>
</comment>
<comment type="subcellular location">
    <subcellularLocation>
        <location evidence="4">Nucleus</location>
    </subcellularLocation>
</comment>
<comment type="similarity">
    <text evidence="6">Belongs to the tRNA pseudouridine synthase TruA family.</text>
</comment>
<keyword id="KW-0413">Isomerase</keyword>
<keyword id="KW-0479">Metal-binding</keyword>
<keyword id="KW-0507">mRNA processing</keyword>
<keyword id="KW-0539">Nucleus</keyword>
<keyword id="KW-0597">Phosphoprotein</keyword>
<keyword id="KW-1185">Reference proteome</keyword>
<keyword id="KW-0819">tRNA processing</keyword>
<keyword id="KW-0862">Zinc</keyword>
<gene>
    <name type="primary">pus1</name>
    <name type="synonym">lps1</name>
    <name type="ORF">SPCC126.03</name>
</gene>
<organism>
    <name type="scientific">Schizosaccharomyces pombe (strain 972 / ATCC 24843)</name>
    <name type="common">Fission yeast</name>
    <dbReference type="NCBI Taxonomy" id="284812"/>
    <lineage>
        <taxon>Eukaryota</taxon>
        <taxon>Fungi</taxon>
        <taxon>Dikarya</taxon>
        <taxon>Ascomycota</taxon>
        <taxon>Taphrinomycotina</taxon>
        <taxon>Schizosaccharomycetes</taxon>
        <taxon>Schizosaccharomycetales</taxon>
        <taxon>Schizosaccharomycetaceae</taxon>
        <taxon>Schizosaccharomyces</taxon>
    </lineage>
</organism>